<reference key="1">
    <citation type="journal article" date="1999" name="J. Virol.">
        <title>Identification of a spliced gene from Kaposi's sarcoma-associated herpesvirus encoding a protein with similarities to latent membrane proteins 1 and 2A of Epstein-Barr virus.</title>
        <authorList>
            <person name="Glenn M."/>
            <person name="Rainbow L."/>
            <person name="Aurade F."/>
            <person name="Davison A."/>
            <person name="Schulz T.F."/>
        </authorList>
    </citation>
    <scope>NUCLEOTIDE SEQUENCE [LARGE SCALE GENOMIC DNA]</scope>
</reference>
<reference key="2">
    <citation type="journal article" date="2006" name="J. Gen. Virol.">
        <title>Kaposi's sarcoma-associated herpesvirus immune modulation: an overview.</title>
        <authorList>
            <person name="Rezaee S.A.R."/>
            <person name="Cunningham C."/>
            <person name="Davison A.J."/>
            <person name="Blackbourn D.J."/>
        </authorList>
    </citation>
    <scope>NUCLEOTIDE SEQUENCE [LARGE SCALE GENOMIC DNA]</scope>
</reference>
<reference key="3">
    <citation type="journal article" date="2015" name="Cell Host Microbe">
        <title>Inhibition of cGAS DNA Sensing by a Herpesvirus Virion Protein.</title>
        <authorList>
            <person name="Wu J.J."/>
            <person name="Li W."/>
            <person name="Shao Y."/>
            <person name="Avey D."/>
            <person name="Fu B."/>
            <person name="Gillen J."/>
            <person name="Hand T."/>
            <person name="Ma S."/>
            <person name="Liu X."/>
            <person name="Miley W."/>
            <person name="Konrad A."/>
            <person name="Neipel F."/>
            <person name="Stuerzl M."/>
            <person name="Whitby D."/>
            <person name="Li H."/>
            <person name="Zhu F."/>
        </authorList>
    </citation>
    <scope>FUNCTION</scope>
    <scope>INTERACTION WITH HOST CGAS</scope>
    <scope>SUBCELLULAR LOCATION</scope>
</reference>
<reference key="4">
    <citation type="journal article" date="2016" name="J. Virol.">
        <title>Kaposi's sarcoma-associated herpesvirus inhibitor of cGAS (KicGAS), encoded by ORF52, is an abundant tegument protein and is required for production of infectious progeny viruses.</title>
        <authorList>
            <person name="Li W."/>
            <person name="Avey D."/>
            <person name="Fu B."/>
            <person name="Wu J.J."/>
            <person name="Ma S."/>
            <person name="Liu X."/>
            <person name="Zhu F."/>
        </authorList>
    </citation>
    <scope>SUBCELLULAR LOCATION</scope>
    <scope>PHOSPHORYLATION AT SER-123</scope>
</reference>
<reference key="5">
    <citation type="journal article" date="2017" name="Mol. Cell">
        <title>HEXIM1 and NEAT1 Long non-coding RNA form a multi-subunit complex that regulates DNA-mediated innate immune response.</title>
        <authorList>
            <person name="Morchikh M."/>
            <person name="Cribier A."/>
            <person name="Raffel R."/>
            <person name="Amraoui S."/>
            <person name="Cau J."/>
            <person name="Severac D."/>
            <person name="Dubois E."/>
            <person name="Schwartz O."/>
            <person name="Bennasser Y."/>
            <person name="Benkirane M."/>
        </authorList>
    </citation>
    <scope>FUNCTION</scope>
    <scope>INTERACTION WITH CGAS AND PQBP1</scope>
</reference>
<reference key="6">
    <citation type="journal article" date="2021" name="Mol. Cell">
        <title>Viral tegument proteins restrict cGAS-DNA phase separation to mediate immune evasion.</title>
        <authorList>
            <person name="Xu G."/>
            <person name="Liu C."/>
            <person name="Zhou S."/>
            <person name="Li Q."/>
            <person name="Feng Y."/>
            <person name="Sun P."/>
            <person name="Feng H."/>
            <person name="Gao Y."/>
            <person name="Zhu J."/>
            <person name="Luo X."/>
            <person name="Zhan Q."/>
            <person name="Liu S."/>
            <person name="Zhu S."/>
            <person name="Deng H."/>
            <person name="Li D."/>
            <person name="Gao P."/>
        </authorList>
    </citation>
    <scope>FUNCTION</scope>
    <scope>DNA-BINDING</scope>
    <scope>INTERACTION WITH HOST CGAS</scope>
    <scope>MUTAGENESIS OF 5-ARG--LYS-20; 29-ARG--LYS-33; 42-ARG--LYS-51; 68-LYS--ARG-73; 75-ARG--LYS-92; 106-GLY--ASP-131 AND 117-ARG--ARG-120</scope>
</reference>
<reference key="7">
    <citation type="journal article" date="2021" name="Nucleic Acids Res.">
        <title>Cooperative DNA binding mediated by KicGAS/ORF52 oligomerization allows inhibition of DNA-induced phase separation and activation of cGAS.</title>
        <authorList>
            <person name="Bhowmik D."/>
            <person name="Du M."/>
            <person name="Tian Y."/>
            <person name="Ma S."/>
            <person name="Wu J."/>
            <person name="Chen Z."/>
            <person name="Yin Q."/>
            <person name="Zhu F."/>
        </authorList>
    </citation>
    <scope>FUNCTION</scope>
    <scope>DNA-BINDING</scope>
    <scope>SUBUNIT</scope>
    <scope>INTERACTION WITH HOST CGAS</scope>
    <scope>MUTAGENESIS OF LEU-17; ILE-21; LEU-24; GLU-27; ASN-28; LEU-31; ILE-70; VAL-74; VAL-87; LEU-91; LEU-96; ARG-97; ILE-98; VAL-100 AND 117-ARG--ARG-120</scope>
</reference>
<evidence type="ECO:0000256" key="1">
    <source>
        <dbReference type="SAM" id="MobiDB-lite"/>
    </source>
</evidence>
<evidence type="ECO:0000269" key="2">
    <source>
    </source>
</evidence>
<evidence type="ECO:0000269" key="3">
    <source>
    </source>
</evidence>
<evidence type="ECO:0000269" key="4">
    <source>
    </source>
</evidence>
<evidence type="ECO:0000269" key="5">
    <source>
    </source>
</evidence>
<evidence type="ECO:0000269" key="6">
    <source>
    </source>
</evidence>
<evidence type="ECO:0000303" key="7">
    <source>
    </source>
</evidence>
<evidence type="ECO:0000303" key="8">
    <source>
    </source>
</evidence>
<evidence type="ECO:0000305" key="9"/>
<evidence type="ECO:0007829" key="10">
    <source>
        <dbReference type="PDB" id="7TDQ"/>
    </source>
</evidence>
<organismHost>
    <name type="scientific">Homo sapiens</name>
    <name type="common">Human</name>
    <dbReference type="NCBI Taxonomy" id="9606"/>
</organismHost>
<dbReference type="EMBL" id="AF148805">
    <property type="protein sequence ID" value="ABD28903.1"/>
    <property type="molecule type" value="Genomic_DNA"/>
</dbReference>
<dbReference type="RefSeq" id="YP_001129405.1">
    <property type="nucleotide sequence ID" value="NC_009333.1"/>
</dbReference>
<dbReference type="PDB" id="7TDQ">
    <property type="method" value="X-ray"/>
    <property type="resolution" value="2.50 A"/>
    <property type="chains" value="A/B=9-95"/>
</dbReference>
<dbReference type="PDBsum" id="7TDQ"/>
<dbReference type="SMR" id="Q2HR80"/>
<dbReference type="BioGRID" id="1776999">
    <property type="interactions" value="4"/>
</dbReference>
<dbReference type="IntAct" id="Q2HR80">
    <property type="interactions" value="8"/>
</dbReference>
<dbReference type="iPTMnet" id="Q2HR80"/>
<dbReference type="DNASU" id="4961496"/>
<dbReference type="GeneID" id="4961496"/>
<dbReference type="KEGG" id="vg:4961496"/>
<dbReference type="Proteomes" id="UP000000942">
    <property type="component" value="Segment"/>
</dbReference>
<dbReference type="GO" id="GO:0030430">
    <property type="term" value="C:host cell cytoplasm"/>
    <property type="evidence" value="ECO:0007669"/>
    <property type="project" value="UniProtKB-SubCell"/>
</dbReference>
<dbReference type="GO" id="GO:0019033">
    <property type="term" value="C:viral tegument"/>
    <property type="evidence" value="ECO:0007669"/>
    <property type="project" value="UniProtKB-SubCell"/>
</dbReference>
<dbReference type="GO" id="GO:0003690">
    <property type="term" value="F:double-stranded DNA binding"/>
    <property type="evidence" value="ECO:0000314"/>
    <property type="project" value="UniProtKB"/>
</dbReference>
<dbReference type="GO" id="GO:0052170">
    <property type="term" value="P:symbiont-mediated suppression of host innate immune response"/>
    <property type="evidence" value="ECO:0000314"/>
    <property type="project" value="UniProtKB"/>
</dbReference>
<dbReference type="Gene3D" id="1.10.3390.10">
    <property type="entry name" value="YejL-like"/>
    <property type="match status" value="1"/>
</dbReference>
<dbReference type="InterPro" id="IPR008642">
    <property type="entry name" value="Herpes_BLRF2"/>
</dbReference>
<dbReference type="Pfam" id="PF05812">
    <property type="entry name" value="Herpes_BLRF2"/>
    <property type="match status" value="1"/>
</dbReference>
<dbReference type="SUPFAM" id="SSF160459">
    <property type="entry name" value="BLRF2-like"/>
    <property type="match status" value="1"/>
</dbReference>
<protein>
    <recommendedName>
        <fullName evidence="9">Tegument protein ORF52</fullName>
    </recommendedName>
    <alternativeName>
        <fullName evidence="8">Kaposi's sarcoma-associated herpesvirus inhibitor of cGAS</fullName>
        <shortName evidence="8">KicGAS</shortName>
    </alternativeName>
</protein>
<sequence>MAAPRGRPKKDLTMEDLTAKISQLTVENRELRKALGSTADPRDRPLTATEKEAQLTATVGALSAAAAKKIEARVRTIFSKVVTQKQVDDALKGLSLRIDVCMSDGGTAKPPPGANNRRRRGASTTRAGVDD</sequence>
<comment type="function">
    <text evidence="2 4 5 6">Plays a role in the inhibition of host innate immune system by targeting the CGAS enzymatic activity which is the principal cytosolic DNA sensor that detects invading viral DNA (PubMed:26320998, PubMed:34015248, PubMed:34387695). Acts by inhibiting CGAS-DNA phase separation: directly binds double-stranded DNA (dsDNA) in a length dependent but sequence independent manner and is able to form DNA-induced phase separation in infected cells (PubMed:34015248, PubMed:34387695). DNA phase separation of ORF52 mediates disruption of liquid-like droplets in which CGAS is activated, thereby preventing CGAS activity (PubMed:34015248, PubMed:34387695). Targets also the HDP-RNP complex composed of DNA-PK subunits and paraspeckle proteins (PubMed:28712728). This complex is a key nuclear regulator of DNA-mediated activation of innate immune response through the cGAS-STING pathway (PubMed:28712728).</text>
</comment>
<comment type="subunit">
    <text evidence="2 4 5 6">Homooligomer; homooligomerizes and binds double-stranded DNA (dsDNA) cooperatively (PubMed:34387695). Interacts with host CGAS (PubMed:26320998, PubMed:28712728, PubMed:34015248, PubMed:34387695). Interacts with PQBP1 (PubMed:28712728).</text>
</comment>
<comment type="interaction">
    <interactant intactId="EBI-2608700">
        <id>Q2HR80</id>
    </interactant>
    <interactant intactId="EBI-2608731">
        <id>Q77UV9</id>
        <label>KIE-2</label>
    </interactant>
    <organismsDiffer>true</organismsDiffer>
    <experiments>3</experiments>
</comment>
<comment type="interaction">
    <interactant intactId="EBI-2608700">
        <id>Q2HR80</id>
    </interactant>
    <interactant intactId="EBI-2608736">
        <id>C7E599</id>
        <label>ORF26</label>
    </interactant>
    <organismsDiffer>true</organismsDiffer>
    <experiments>2</experiments>
</comment>
<comment type="interaction">
    <interactant intactId="EBI-2608700">
        <id>Q2HR80</id>
    </interactant>
    <interactant intactId="EBI-2608673">
        <id>O40931</id>
        <label>ORF39</label>
    </interactant>
    <organismsDiffer>true</organismsDiffer>
    <experiments>3</experiments>
</comment>
<comment type="interaction">
    <interactant intactId="EBI-2608700">
        <id>Q2HR80</id>
    </interactant>
    <interactant intactId="EBI-2608592">
        <id>Q76RG4</id>
        <label>ORF53</label>
    </interactant>
    <organismsDiffer>true</organismsDiffer>
    <experiments>2</experiments>
</comment>
<comment type="interaction">
    <interactant intactId="EBI-2608700">
        <id>Q2HR80</id>
    </interactant>
    <interactant intactId="EBI-2608638">
        <id>D0UZU4</id>
        <label>ORF75</label>
    </interactant>
    <organismsDiffer>true</organismsDiffer>
    <experiments>3</experiments>
</comment>
<comment type="subcellular location">
    <subcellularLocation>
        <location evidence="2 3">Host cytoplasm</location>
    </subcellularLocation>
    <subcellularLocation>
        <location evidence="3">Virion tegument</location>
    </subcellularLocation>
</comment>
<comment type="similarity">
    <text evidence="9">Belongs to the herpesviridae BLRF2 family.</text>
</comment>
<keyword id="KW-0002">3D-structure</keyword>
<keyword id="KW-0238">DNA-binding</keyword>
<keyword id="KW-1035">Host cytoplasm</keyword>
<keyword id="KW-0945">Host-virus interaction</keyword>
<keyword id="KW-1090">Inhibition of host innate immune response by virus</keyword>
<keyword id="KW-0597">Phosphoprotein</keyword>
<keyword id="KW-1185">Reference proteome</keyword>
<keyword id="KW-0899">Viral immunoevasion</keyword>
<keyword id="KW-0946">Virion</keyword>
<keyword id="KW-0920">Virion tegument</keyword>
<name>ORF52_HHV8P</name>
<gene>
    <name evidence="7" type="primary">ORF52</name>
</gene>
<feature type="chain" id="PRO_0000423777" description="Tegument protein ORF52">
    <location>
        <begin position="1"/>
        <end position="131"/>
    </location>
</feature>
<feature type="region of interest" description="Disordered" evidence="1">
    <location>
        <begin position="103"/>
        <end position="131"/>
    </location>
</feature>
<feature type="compositionally biased region" description="Low complexity" evidence="1">
    <location>
        <begin position="122"/>
        <end position="131"/>
    </location>
</feature>
<feature type="modified residue" description="Phosphoserine; by host" evidence="3">
    <location>
        <position position="123"/>
    </location>
</feature>
<feature type="mutagenesis site" description="In M1; decreased formation of DNA-induced phase separation, leading to decreased ability to inhibit host CGAS." evidence="5">
    <original>RGRPKKDLTMEDLTAK</original>
    <variation>AGAPAADLTMEDLTAA</variation>
    <location>
        <begin position="5"/>
        <end position="20"/>
    </location>
</feature>
<feature type="mutagenesis site" description="Does not affect homooligomerization; does not affect ability to inhibit host CGAS." evidence="6">
    <original>L</original>
    <variation>A</variation>
    <location>
        <position position="17"/>
    </location>
</feature>
<feature type="mutagenesis site" description="Decreased homooligomerization, formation of DNA-induced phase separation and ability to inhibit host CGAS." evidence="6">
    <original>I</original>
    <variation>A</variation>
    <location>
        <position position="21"/>
    </location>
</feature>
<feature type="mutagenesis site" description="Decreased homooligomerization, formation of DNA-induced phase separation and ability to inhibit host CGAS." evidence="6">
    <original>L</original>
    <variation>A</variation>
    <location>
        <position position="24"/>
    </location>
</feature>
<feature type="mutagenesis site" description="Does not affect homooligomerization; does not affect ability to inhibit host CGAS." evidence="6">
    <original>E</original>
    <variation>A</variation>
    <location>
        <position position="27"/>
    </location>
</feature>
<feature type="mutagenesis site" description="Decreased homooligomerization, formation of DNA-induced phase separation and ability to inhibit host CGAS." evidence="6">
    <original>N</original>
    <variation>A</variation>
    <location>
        <position position="28"/>
    </location>
</feature>
<feature type="mutagenesis site" description="In M2; decreased formation of DNA-induced phase separation, leading to decreased ability to inhibit host CGAS." evidence="5">
    <original>RELRK</original>
    <variation>AELAA</variation>
    <location>
        <begin position="29"/>
        <end position="33"/>
    </location>
</feature>
<feature type="mutagenesis site" description="Decreased homooligomerization, formation of DNA-induced phase separation and ability to inhibit host CGAS." evidence="6">
    <original>L</original>
    <variation>A</variation>
    <location>
        <position position="31"/>
    </location>
</feature>
<feature type="mutagenesis site" description="In M3; decreased formation of DNA-induced phase separation, leading to decreased ability to inhibit host CGAS." evidence="5">
    <original>RDRPLTATEK</original>
    <variation>ADAPLTATEA</variation>
    <location>
        <begin position="42"/>
        <end position="51"/>
    </location>
</feature>
<feature type="mutagenesis site" description="In M4; does not affect formation of DNA-induced phase separation." evidence="5">
    <original>KKIEAR</original>
    <variation>AAEIAA</variation>
    <location>
        <begin position="68"/>
        <end position="73"/>
    </location>
</feature>
<feature type="mutagenesis site" description="Does not affect DNA-binding; does not affect ability to inhibit host CGAS." evidence="6">
    <original>I</original>
    <variation>A</variation>
    <location>
        <position position="70"/>
    </location>
</feature>
<feature type="mutagenesis site" description="Does not affect DNA-binding; does not affect ability to inhibit host CGAS." evidence="6">
    <original>V</original>
    <variation>A</variation>
    <location>
        <position position="74"/>
    </location>
</feature>
<feature type="mutagenesis site" description="In M5; decreased formation of DNA-induced phase separation, leading to decreased ability to inhibit host CGAS." evidence="5">
    <original>RTIFSKVVTQKQVDDALK</original>
    <variation>ATIFSAVVTQAQVDDALA</variation>
    <location>
        <begin position="75"/>
        <end position="92"/>
    </location>
</feature>
<feature type="mutagenesis site" description="Does not affect DNA-binding; does not affect ability to inhibit host CGAS." evidence="6">
    <original>V</original>
    <variation>A</variation>
    <location>
        <position position="87"/>
    </location>
</feature>
<feature type="mutagenesis site" description="Does not affect DNA-binding; does not affect ability to inhibit host CGAS." evidence="6">
    <original>L</original>
    <variation>A</variation>
    <location>
        <position position="91"/>
    </location>
</feature>
<feature type="mutagenesis site" description="Does not affect DNA-binding; does not affect ability to inhibit host CGAS." evidence="6">
    <original>L</original>
    <variation>A</variation>
    <location>
        <position position="96"/>
    </location>
</feature>
<feature type="mutagenesis site" description="Decreased DNA-binding and ability to inhibit host CGAS." evidence="6">
    <original>R</original>
    <variation>A</variation>
    <location>
        <position position="97"/>
    </location>
</feature>
<feature type="mutagenesis site" description="Does not affect DNA-binding; does not affect ability to inhibit host CGAS." evidence="6">
    <original>I</original>
    <variation>A</variation>
    <location>
        <position position="98"/>
    </location>
</feature>
<feature type="mutagenesis site" description="Does not affect DNA-binding; does not affect ability to inhibit host CGAS." evidence="6">
    <original>V</original>
    <variation>A</variation>
    <location>
        <position position="100"/>
    </location>
</feature>
<feature type="mutagenesis site" description="In M7; abolished formation of DNA-induced phase separation, preventing ability to inhibit host CGAS." evidence="5">
    <location>
        <begin position="106"/>
        <end position="131"/>
    </location>
</feature>
<feature type="mutagenesis site" description="In M8; abolished formation of DNA-induced phase separation, preventing ability to inhibit host CGAS." evidence="5 6">
    <original>RRRR</original>
    <variation>AAAA</variation>
    <location>
        <begin position="117"/>
        <end position="120"/>
    </location>
</feature>
<feature type="mutagenesis site" description="Does not affect formation of DNA-induced phase separation." evidence="6">
    <original>RRRR</original>
    <variation>KKKK</variation>
    <location>
        <begin position="117"/>
        <end position="120"/>
    </location>
</feature>
<feature type="helix" evidence="10">
    <location>
        <begin position="14"/>
        <end position="36"/>
    </location>
</feature>
<feature type="helix" evidence="10">
    <location>
        <begin position="41"/>
        <end position="43"/>
    </location>
</feature>
<feature type="helix" evidence="10">
    <location>
        <begin position="48"/>
        <end position="78"/>
    </location>
</feature>
<feature type="helix" evidence="10">
    <location>
        <begin position="84"/>
        <end position="93"/>
    </location>
</feature>
<organism>
    <name type="scientific">Human herpesvirus 8 type P (isolate GK18)</name>
    <name type="common">HHV-8</name>
    <name type="synonym">Kaposi's sarcoma-associated herpesvirus</name>
    <dbReference type="NCBI Taxonomy" id="868565"/>
    <lineage>
        <taxon>Viruses</taxon>
        <taxon>Duplodnaviria</taxon>
        <taxon>Heunggongvirae</taxon>
        <taxon>Peploviricota</taxon>
        <taxon>Herviviricetes</taxon>
        <taxon>Herpesvirales</taxon>
        <taxon>Orthoherpesviridae</taxon>
        <taxon>Gammaherpesvirinae</taxon>
        <taxon>Rhadinovirus</taxon>
        <taxon>Rhadinovirus humangamma8</taxon>
        <taxon>Human herpesvirus 8</taxon>
    </lineage>
</organism>
<proteinExistence type="evidence at protein level"/>
<accession>Q2HR80</accession>
<accession>D0UZR5</accession>